<organism>
    <name type="scientific">Stenotrophomonas maltophilia (strain K279a)</name>
    <dbReference type="NCBI Taxonomy" id="522373"/>
    <lineage>
        <taxon>Bacteria</taxon>
        <taxon>Pseudomonadati</taxon>
        <taxon>Pseudomonadota</taxon>
        <taxon>Gammaproteobacteria</taxon>
        <taxon>Lysobacterales</taxon>
        <taxon>Lysobacteraceae</taxon>
        <taxon>Stenotrophomonas</taxon>
        <taxon>Stenotrophomonas maltophilia group</taxon>
    </lineage>
</organism>
<dbReference type="EC" id="2.8.4.4" evidence="1"/>
<dbReference type="EMBL" id="AM743169">
    <property type="protein sequence ID" value="CAQ46864.1"/>
    <property type="molecule type" value="Genomic_DNA"/>
</dbReference>
<dbReference type="RefSeq" id="WP_012480900.1">
    <property type="nucleotide sequence ID" value="NC_010943.1"/>
</dbReference>
<dbReference type="SMR" id="B2FP10"/>
<dbReference type="EnsemblBacteria" id="CAQ46864">
    <property type="protein sequence ID" value="CAQ46864"/>
    <property type="gene ID" value="Smlt3438"/>
</dbReference>
<dbReference type="GeneID" id="93834440"/>
<dbReference type="KEGG" id="sml:Smlt3438"/>
<dbReference type="PATRIC" id="fig|522373.3.peg.3225"/>
<dbReference type="eggNOG" id="COG0621">
    <property type="taxonomic scope" value="Bacteria"/>
</dbReference>
<dbReference type="HOGENOM" id="CLU_018697_0_0_6"/>
<dbReference type="Proteomes" id="UP000008840">
    <property type="component" value="Chromosome"/>
</dbReference>
<dbReference type="GO" id="GO:0005829">
    <property type="term" value="C:cytosol"/>
    <property type="evidence" value="ECO:0007669"/>
    <property type="project" value="TreeGrafter"/>
</dbReference>
<dbReference type="GO" id="GO:0051539">
    <property type="term" value="F:4 iron, 4 sulfur cluster binding"/>
    <property type="evidence" value="ECO:0007669"/>
    <property type="project" value="UniProtKB-UniRule"/>
</dbReference>
<dbReference type="GO" id="GO:0035599">
    <property type="term" value="F:aspartic acid methylthiotransferase activity"/>
    <property type="evidence" value="ECO:0007669"/>
    <property type="project" value="TreeGrafter"/>
</dbReference>
<dbReference type="GO" id="GO:0046872">
    <property type="term" value="F:metal ion binding"/>
    <property type="evidence" value="ECO:0007669"/>
    <property type="project" value="UniProtKB-KW"/>
</dbReference>
<dbReference type="GO" id="GO:0103039">
    <property type="term" value="F:protein methylthiotransferase activity"/>
    <property type="evidence" value="ECO:0007669"/>
    <property type="project" value="UniProtKB-EC"/>
</dbReference>
<dbReference type="GO" id="GO:0006400">
    <property type="term" value="P:tRNA modification"/>
    <property type="evidence" value="ECO:0007669"/>
    <property type="project" value="InterPro"/>
</dbReference>
<dbReference type="CDD" id="cd01335">
    <property type="entry name" value="Radical_SAM"/>
    <property type="match status" value="1"/>
</dbReference>
<dbReference type="FunFam" id="2.40.50.140:FF:000210">
    <property type="entry name" value="Ribosomal protein S12 methylthiotransferase RimO"/>
    <property type="match status" value="1"/>
</dbReference>
<dbReference type="FunFam" id="3.40.50.12160:FF:000002">
    <property type="entry name" value="Ribosomal protein S12 methylthiotransferase RimO"/>
    <property type="match status" value="1"/>
</dbReference>
<dbReference type="FunFam" id="3.80.30.20:FF:000001">
    <property type="entry name" value="tRNA-2-methylthio-N(6)-dimethylallyladenosine synthase 2"/>
    <property type="match status" value="1"/>
</dbReference>
<dbReference type="Gene3D" id="3.40.50.12160">
    <property type="entry name" value="Methylthiotransferase, N-terminal domain"/>
    <property type="match status" value="1"/>
</dbReference>
<dbReference type="Gene3D" id="2.40.50.140">
    <property type="entry name" value="Nucleic acid-binding proteins"/>
    <property type="match status" value="1"/>
</dbReference>
<dbReference type="Gene3D" id="3.80.30.20">
    <property type="entry name" value="tm_1862 like domain"/>
    <property type="match status" value="1"/>
</dbReference>
<dbReference type="HAMAP" id="MF_01865">
    <property type="entry name" value="MTTase_RimO"/>
    <property type="match status" value="1"/>
</dbReference>
<dbReference type="InterPro" id="IPR006638">
    <property type="entry name" value="Elp3/MiaA/NifB-like_rSAM"/>
</dbReference>
<dbReference type="InterPro" id="IPR005839">
    <property type="entry name" value="Methylthiotransferase"/>
</dbReference>
<dbReference type="InterPro" id="IPR020612">
    <property type="entry name" value="Methylthiotransferase_CS"/>
</dbReference>
<dbReference type="InterPro" id="IPR013848">
    <property type="entry name" value="Methylthiotransferase_N"/>
</dbReference>
<dbReference type="InterPro" id="IPR038135">
    <property type="entry name" value="Methylthiotransferase_N_sf"/>
</dbReference>
<dbReference type="InterPro" id="IPR012340">
    <property type="entry name" value="NA-bd_OB-fold"/>
</dbReference>
<dbReference type="InterPro" id="IPR005840">
    <property type="entry name" value="Ribosomal_uS12_MeSTrfase_RimO"/>
</dbReference>
<dbReference type="InterPro" id="IPR007197">
    <property type="entry name" value="rSAM"/>
</dbReference>
<dbReference type="InterPro" id="IPR023404">
    <property type="entry name" value="rSAM_horseshoe"/>
</dbReference>
<dbReference type="InterPro" id="IPR002792">
    <property type="entry name" value="TRAM_dom"/>
</dbReference>
<dbReference type="NCBIfam" id="TIGR01125">
    <property type="entry name" value="30S ribosomal protein S12 methylthiotransferase RimO"/>
    <property type="match status" value="1"/>
</dbReference>
<dbReference type="NCBIfam" id="TIGR00089">
    <property type="entry name" value="MiaB/RimO family radical SAM methylthiotransferase"/>
    <property type="match status" value="1"/>
</dbReference>
<dbReference type="PANTHER" id="PTHR43837">
    <property type="entry name" value="RIBOSOMAL PROTEIN S12 METHYLTHIOTRANSFERASE RIMO"/>
    <property type="match status" value="1"/>
</dbReference>
<dbReference type="PANTHER" id="PTHR43837:SF1">
    <property type="entry name" value="RIBOSOMAL PROTEIN US12 METHYLTHIOTRANSFERASE RIMO"/>
    <property type="match status" value="1"/>
</dbReference>
<dbReference type="Pfam" id="PF04055">
    <property type="entry name" value="Radical_SAM"/>
    <property type="match status" value="1"/>
</dbReference>
<dbReference type="Pfam" id="PF18693">
    <property type="entry name" value="TRAM_2"/>
    <property type="match status" value="1"/>
</dbReference>
<dbReference type="Pfam" id="PF00919">
    <property type="entry name" value="UPF0004"/>
    <property type="match status" value="1"/>
</dbReference>
<dbReference type="SFLD" id="SFLDG01082">
    <property type="entry name" value="B12-binding_domain_containing"/>
    <property type="match status" value="1"/>
</dbReference>
<dbReference type="SFLD" id="SFLDS00029">
    <property type="entry name" value="Radical_SAM"/>
    <property type="match status" value="1"/>
</dbReference>
<dbReference type="SFLD" id="SFLDF00274">
    <property type="entry name" value="ribosomal_protein_S12_methylth"/>
    <property type="match status" value="1"/>
</dbReference>
<dbReference type="SMART" id="SM00729">
    <property type="entry name" value="Elp3"/>
    <property type="match status" value="1"/>
</dbReference>
<dbReference type="SUPFAM" id="SSF102114">
    <property type="entry name" value="Radical SAM enzymes"/>
    <property type="match status" value="1"/>
</dbReference>
<dbReference type="PROSITE" id="PS51449">
    <property type="entry name" value="MTTASE_N"/>
    <property type="match status" value="1"/>
</dbReference>
<dbReference type="PROSITE" id="PS01278">
    <property type="entry name" value="MTTASE_RADICAL"/>
    <property type="match status" value="1"/>
</dbReference>
<dbReference type="PROSITE" id="PS51918">
    <property type="entry name" value="RADICAL_SAM"/>
    <property type="match status" value="1"/>
</dbReference>
<dbReference type="PROSITE" id="PS50926">
    <property type="entry name" value="TRAM"/>
    <property type="match status" value="1"/>
</dbReference>
<comment type="function">
    <text evidence="1">Catalyzes the methylthiolation of an aspartic acid residue of ribosomal protein uS12.</text>
</comment>
<comment type="catalytic activity">
    <reaction evidence="1">
        <text>L-aspartate(89)-[ribosomal protein uS12]-hydrogen + (sulfur carrier)-SH + AH2 + 2 S-adenosyl-L-methionine = 3-methylsulfanyl-L-aspartate(89)-[ribosomal protein uS12]-hydrogen + (sulfur carrier)-H + 5'-deoxyadenosine + L-methionine + A + S-adenosyl-L-homocysteine + 2 H(+)</text>
        <dbReference type="Rhea" id="RHEA:37087"/>
        <dbReference type="Rhea" id="RHEA-COMP:10460"/>
        <dbReference type="Rhea" id="RHEA-COMP:10461"/>
        <dbReference type="Rhea" id="RHEA-COMP:14737"/>
        <dbReference type="Rhea" id="RHEA-COMP:14739"/>
        <dbReference type="ChEBI" id="CHEBI:13193"/>
        <dbReference type="ChEBI" id="CHEBI:15378"/>
        <dbReference type="ChEBI" id="CHEBI:17319"/>
        <dbReference type="ChEBI" id="CHEBI:17499"/>
        <dbReference type="ChEBI" id="CHEBI:29917"/>
        <dbReference type="ChEBI" id="CHEBI:29961"/>
        <dbReference type="ChEBI" id="CHEBI:57844"/>
        <dbReference type="ChEBI" id="CHEBI:57856"/>
        <dbReference type="ChEBI" id="CHEBI:59789"/>
        <dbReference type="ChEBI" id="CHEBI:64428"/>
        <dbReference type="ChEBI" id="CHEBI:73599"/>
        <dbReference type="EC" id="2.8.4.4"/>
    </reaction>
</comment>
<comment type="cofactor">
    <cofactor evidence="1">
        <name>[4Fe-4S] cluster</name>
        <dbReference type="ChEBI" id="CHEBI:49883"/>
    </cofactor>
    <text evidence="1">Binds 2 [4Fe-4S] clusters. One cluster is coordinated with 3 cysteines and an exchangeable S-adenosyl-L-methionine.</text>
</comment>
<comment type="subcellular location">
    <subcellularLocation>
        <location evidence="1">Cytoplasm</location>
    </subcellularLocation>
</comment>
<comment type="similarity">
    <text evidence="1">Belongs to the methylthiotransferase family. RimO subfamily.</text>
</comment>
<gene>
    <name evidence="1" type="primary">rimO</name>
    <name type="ordered locus">Smlt3438</name>
</gene>
<reference key="1">
    <citation type="journal article" date="2008" name="Genome Biol.">
        <title>The complete genome, comparative and functional analysis of Stenotrophomonas maltophilia reveals an organism heavily shielded by drug resistance determinants.</title>
        <authorList>
            <person name="Crossman L.C."/>
            <person name="Gould V.C."/>
            <person name="Dow J.M."/>
            <person name="Vernikos G.S."/>
            <person name="Okazaki A."/>
            <person name="Sebaihia M."/>
            <person name="Saunders D."/>
            <person name="Arrowsmith C."/>
            <person name="Carver T."/>
            <person name="Peters N."/>
            <person name="Adlem E."/>
            <person name="Kerhornou A."/>
            <person name="Lord A."/>
            <person name="Murphy L."/>
            <person name="Seeger K."/>
            <person name="Squares R."/>
            <person name="Rutter S."/>
            <person name="Quail M.A."/>
            <person name="Rajandream M.A."/>
            <person name="Harris D."/>
            <person name="Churcher C."/>
            <person name="Bentley S.D."/>
            <person name="Parkhill J."/>
            <person name="Thomson N.R."/>
            <person name="Avison M.B."/>
        </authorList>
    </citation>
    <scope>NUCLEOTIDE SEQUENCE [LARGE SCALE GENOMIC DNA]</scope>
    <source>
        <strain>K279a</strain>
    </source>
</reference>
<proteinExistence type="inferred from homology"/>
<keyword id="KW-0004">4Fe-4S</keyword>
<keyword id="KW-0963">Cytoplasm</keyword>
<keyword id="KW-0408">Iron</keyword>
<keyword id="KW-0411">Iron-sulfur</keyword>
<keyword id="KW-0479">Metal-binding</keyword>
<keyword id="KW-1185">Reference proteome</keyword>
<keyword id="KW-0949">S-adenosyl-L-methionine</keyword>
<keyword id="KW-0808">Transferase</keyword>
<feature type="chain" id="PRO_0000375020" description="Ribosomal protein uS12 methylthiotransferase RimO">
    <location>
        <begin position="1"/>
        <end position="453"/>
    </location>
</feature>
<feature type="domain" description="MTTase N-terminal" evidence="1">
    <location>
        <begin position="6"/>
        <end position="116"/>
    </location>
</feature>
<feature type="domain" description="Radical SAM core" evidence="2">
    <location>
        <begin position="133"/>
        <end position="370"/>
    </location>
</feature>
<feature type="domain" description="TRAM" evidence="1">
    <location>
        <begin position="373"/>
        <end position="441"/>
    </location>
</feature>
<feature type="binding site" evidence="1">
    <location>
        <position position="15"/>
    </location>
    <ligand>
        <name>[4Fe-4S] cluster</name>
        <dbReference type="ChEBI" id="CHEBI:49883"/>
        <label>1</label>
    </ligand>
</feature>
<feature type="binding site" evidence="1">
    <location>
        <position position="51"/>
    </location>
    <ligand>
        <name>[4Fe-4S] cluster</name>
        <dbReference type="ChEBI" id="CHEBI:49883"/>
        <label>1</label>
    </ligand>
</feature>
<feature type="binding site" evidence="1">
    <location>
        <position position="80"/>
    </location>
    <ligand>
        <name>[4Fe-4S] cluster</name>
        <dbReference type="ChEBI" id="CHEBI:49883"/>
        <label>1</label>
    </ligand>
</feature>
<feature type="binding site" evidence="1">
    <location>
        <position position="147"/>
    </location>
    <ligand>
        <name>[4Fe-4S] cluster</name>
        <dbReference type="ChEBI" id="CHEBI:49883"/>
        <label>2</label>
        <note>4Fe-4S-S-AdoMet</note>
    </ligand>
</feature>
<feature type="binding site" evidence="1">
    <location>
        <position position="151"/>
    </location>
    <ligand>
        <name>[4Fe-4S] cluster</name>
        <dbReference type="ChEBI" id="CHEBI:49883"/>
        <label>2</label>
        <note>4Fe-4S-S-AdoMet</note>
    </ligand>
</feature>
<feature type="binding site" evidence="1">
    <location>
        <position position="154"/>
    </location>
    <ligand>
        <name>[4Fe-4S] cluster</name>
        <dbReference type="ChEBI" id="CHEBI:49883"/>
        <label>2</label>
        <note>4Fe-4S-S-AdoMet</note>
    </ligand>
</feature>
<protein>
    <recommendedName>
        <fullName evidence="1">Ribosomal protein uS12 methylthiotransferase RimO</fullName>
        <shortName evidence="1">uS12 MTTase</shortName>
        <shortName evidence="1">uS12 methylthiotransferase</shortName>
        <ecNumber evidence="1">2.8.4.4</ecNumber>
    </recommendedName>
    <alternativeName>
        <fullName evidence="1">Ribosomal protein uS12 (aspartate-C(3))-methylthiotransferase</fullName>
    </alternativeName>
    <alternativeName>
        <fullName evidence="1">Ribosome maturation factor RimO</fullName>
    </alternativeName>
</protein>
<accession>B2FP10</accession>
<name>RIMO_STRMK</name>
<evidence type="ECO:0000255" key="1">
    <source>
        <dbReference type="HAMAP-Rule" id="MF_01865"/>
    </source>
</evidence>
<evidence type="ECO:0000255" key="2">
    <source>
        <dbReference type="PROSITE-ProRule" id="PRU01266"/>
    </source>
</evidence>
<sequence>MSQLNPKVGFVSLGCPKALVDSERILTQLRSEGYDIVPSYDSADVVVVNTCGFIDSAVTESLDAIGEAMNQNGKVIVTGCLGKRPEQIREAYPNVLAVSGPQDYQSVMEAVHEALPPKHDPFVDLVPDYGIKLTPRHYAYLKISEGCNHKCSFCIIPSMRGKLVSRPVDEVLREAERLVRGGVRELLVVSQDTSAYGVDVKYAEKMWRNKAYQTRLKALCEGLSELDAWVRMHYVYPYPHVDEVVPLMAENRILPYLDIPFQHASPRILRLMKRPGAVEKTLERVQNWRRIAPDITVRSTFIVGFPGETEAEFEELLSFLDEAQLDRVGAFAYSPVEGATANDLPDAVPEEVKQERLARFMEKQAQISAARLEAKIGTVQQCLVDAIEGDIAVARSKADAPEIDGLVHIQNADQVPLRVGEFVDVEITESDEHDLYGDALPAATRPAFDLKML</sequence>